<proteinExistence type="evidence at protein level"/>
<reference key="1">
    <citation type="journal article" date="1988" name="Nature">
        <title>A new retinoic acid receptor identified from a hepatocellular carcinoma.</title>
        <authorList>
            <person name="Benbrook D."/>
            <person name="Lernherdt E."/>
            <person name="Pfahl M."/>
        </authorList>
    </citation>
    <scope>NUCLEOTIDE SEQUENCE [MRNA] (ISOFORM BETA-2)</scope>
    <source>
        <tissue>Placenta</tissue>
    </source>
</reference>
<reference key="2">
    <citation type="journal article" date="1987" name="Nature">
        <title>A novel steroid thyroid hormone receptor-related gene inappropriately expressed in human hepatocellular carcinoma.</title>
        <authorList>
            <person name="de The H."/>
            <person name="Marchio A."/>
            <person name="Tiollais P."/>
            <person name="Dejean A."/>
        </authorList>
    </citation>
    <scope>NUCLEOTIDE SEQUENCE [MRNA] (ISOFORM BETA-2)</scope>
</reference>
<reference key="3">
    <citation type="journal article" date="1999" name="Proc. Natl. Acad. Sci. U.S.A.">
        <title>Elevated retinoic acid receptor beta(4) protein in human breast tumor cells with nuclear and cytoplasmic localization.</title>
        <authorList>
            <person name="Sommer K.M."/>
            <person name="Chen L.I."/>
            <person name="Treuting P.M."/>
            <person name="Smith L.T."/>
            <person name="Swisshelm K."/>
        </authorList>
    </citation>
    <scope>NUCLEOTIDE SEQUENCE [MRNA] (ISOFORM BETA-4)</scope>
    <source>
        <tissue>Mammary tumor</tissue>
    </source>
</reference>
<reference key="4">
    <citation type="journal article" date="2004" name="Genome Res.">
        <title>The status, quality, and expansion of the NIH full-length cDNA project: the Mammalian Gene Collection (MGC).</title>
        <authorList>
            <consortium name="The MGC Project Team"/>
        </authorList>
    </citation>
    <scope>NUCLEOTIDE SEQUENCE [LARGE SCALE MRNA] (ISOFORM BETA-2)</scope>
    <source>
        <tissue>Placenta</tissue>
    </source>
</reference>
<reference key="5">
    <citation type="journal article" date="1991" name="DNA Seq.">
        <title>Mouse and human retinoic acid receptor beta 2 promoters: sequence comparison and localization of retinoic acid responsiveness.</title>
        <authorList>
            <person name="Shen S."/>
            <person name="Kruyt F.A."/>
            <person name="den Hertog J."/>
            <person name="van der Saag P.T."/>
            <person name="Kruijer W."/>
        </authorList>
    </citation>
    <scope>NUCLEOTIDE SEQUENCE [GENOMIC DNA] OF 1-52 (ISOFORM BETA-2)</scope>
</reference>
<reference key="6">
    <citation type="journal article" date="1994" name="Cancer Res.">
        <title>Fetal isoform of human retinoic acid receptor beta expressed in small cell lung cancer lines.</title>
        <authorList>
            <person name="Houle B."/>
            <person name="Pelletier M."/>
            <person name="Wu J."/>
            <person name="Goodyer C."/>
            <person name="Bradley W.E."/>
        </authorList>
    </citation>
    <scope>NUCLEOTIDE SEQUENCE [GENOMIC DNA] OF 1-72 (ISOFORM BETA-1)</scope>
</reference>
<reference key="7">
    <citation type="journal article" date="1986" name="Nature">
        <title>Hepatitis B virus DNA integration in a sequence homologous to v-erb-A and steroid receptor genes in a hepatocellular carcinoma.</title>
        <authorList>
            <person name="Dejean A."/>
            <person name="Bougueleret L."/>
            <person name="Grzeschik K.-H."/>
            <person name="Tiollais P."/>
        </authorList>
    </citation>
    <scope>NUCLEOTIDE SEQUENCE [GENOMIC DNA] OF 61-109</scope>
</reference>
<reference key="8">
    <citation type="journal article" date="1990" name="Mol. Biol. Med.">
        <title>Hepatitis B virus as an insertional mutagene in a human hepatocellular carcinoma.</title>
        <authorList>
            <person name="Dejean A."/>
            <person name="de The H."/>
        </authorList>
    </citation>
    <scope>NUCLEOTIDE SEQUENCE [GENOMIC DNA] OF 61-109</scope>
    <source>
        <tissue>Liver</tissue>
    </source>
</reference>
<reference key="9">
    <citation type="journal article" date="1988" name="Nature">
        <title>Identification of a second human retinoic acid receptor.</title>
        <authorList>
            <person name="Brand N."/>
            <person name="Petkovitch M."/>
            <person name="Krust A."/>
            <person name="Chambon P."/>
            <person name="de The H."/>
            <person name="Marchio A."/>
            <person name="Tiollais P."/>
            <person name="Dejean A."/>
        </authorList>
    </citation>
    <scope>IDENTIFICATION OF LIGAND</scope>
</reference>
<reference key="10">
    <citation type="journal article" date="2003" name="Mol. Endocrinol.">
        <title>Retinoic acid receptors beta and gamma do not repress, but instead activate target gene transcription in both the absence and presence of hormone ligand.</title>
        <authorList>
            <person name="Hauksdottir H."/>
            <person name="Farboud B."/>
            <person name="Privalsky M.L."/>
        </authorList>
    </citation>
    <scope>FUNCTION</scope>
    <scope>HETERODIMERIZATION</scope>
    <scope>INTERACTION WITH NCOR2</scope>
    <scope>MUTAGENESIS OF THR-188; ILE-191; LEU-222; GLY-223 AND ALA-232</scope>
</reference>
<reference key="11">
    <citation type="journal article" date="2014" name="J. Proteomics">
        <title>An enzyme assisted RP-RPLC approach for in-depth analysis of human liver phosphoproteome.</title>
        <authorList>
            <person name="Bian Y."/>
            <person name="Song C."/>
            <person name="Cheng K."/>
            <person name="Dong M."/>
            <person name="Wang F."/>
            <person name="Huang J."/>
            <person name="Sun D."/>
            <person name="Wang L."/>
            <person name="Ye M."/>
            <person name="Zou H."/>
        </authorList>
    </citation>
    <scope>PHOSPHORYLATION [LARGE SCALE ANALYSIS] AT SER-77</scope>
    <scope>IDENTIFICATION BY MASS SPECTROMETRY [LARGE SCALE ANALYSIS]</scope>
    <source>
        <tissue>Liver</tissue>
    </source>
</reference>
<reference key="12">
    <citation type="journal article" date="2017" name="Proc. Natl. Acad. Sci. U.S.A.">
        <title>MicroRNA-10a is crucial for endothelial response to different flow patterns via interaction of retinoid acid receptors and histone deacetylases.</title>
        <authorList>
            <person name="Lee D.Y."/>
            <person name="Lin T.E."/>
            <person name="Lee C.I."/>
            <person name="Zhou J."/>
            <person name="Huang Y.H."/>
            <person name="Lee P.L."/>
            <person name="Shih Y.T."/>
            <person name="Chien S."/>
            <person name="Chiu J.J."/>
        </authorList>
    </citation>
    <scope>SUBCELLULAR LOCATION</scope>
    <scope>TISSUE SPECIFICITY</scope>
</reference>
<reference key="13">
    <citation type="journal article" date="1992" name="Biochemistry">
        <title>Homo- and heteronuclear NMR studies of the human retinoic acid receptor beta DNA-binding domain: sequential assignments and identification of secondary structure elements.</title>
        <authorList>
            <person name="Kathira M."/>
            <person name="Knegtel R.M.A."/>
            <person name="Boelens R."/>
            <person name="Eib D."/>
            <person name="Schilthuis J.G."/>
            <person name="van der Saag P.T."/>
            <person name="Kaptein R."/>
        </authorList>
    </citation>
    <scope>STRUCTURE BY NMR OF 82-160</scope>
</reference>
<reference key="14">
    <citation type="journal article" date="1993" name="J. Biomol. NMR">
        <title>The solution structure of the human retinoic acid receptor-beta DNA-binding domain.</title>
        <authorList>
            <person name="Knegtel R.M.A."/>
            <person name="Katahira M."/>
            <person name="Schilthuis J.G."/>
            <person name="Bonvin A.M."/>
            <person name="Boelens R."/>
            <person name="Eib D."/>
            <person name="van der Saag P.T."/>
            <person name="Kaptein R."/>
        </authorList>
    </citation>
    <scope>STRUCTURE BY NMR OF 82-160</scope>
</reference>
<reference evidence="18" key="15">
    <citation type="journal article" date="2017" name="Nat. Commun.">
        <title>The quaternary architecture of RARbeta-RXRalpha heterodimer facilitates domain-domain signal transmission.</title>
        <authorList>
            <person name="Chandra V."/>
            <person name="Wu D."/>
            <person name="Li S."/>
            <person name="Potluri N."/>
            <person name="Kim Y."/>
            <person name="Rastinejad F."/>
        </authorList>
    </citation>
    <scope>X-RAY CRYSTALLOGRAPHY (3.51 ANGSTROMS) OF 80-455 IN COMPLEX WITH RXRA AND DNA</scope>
    <scope>FUNCTION</scope>
    <scope>DOMAIN</scope>
    <scope>MUTAGENESIS OF GLU-106; ARG-113; MET-120; THR-123; LYS-365; ARG-366; ARG-367; SER-369 AND LYS-370</scope>
</reference>
<reference key="16">
    <citation type="journal article" date="2006" name="Science">
        <title>The consensus coding sequences of human breast and colorectal cancers.</title>
        <authorList>
            <person name="Sjoeblom T."/>
            <person name="Jones S."/>
            <person name="Wood L.D."/>
            <person name="Parsons D.W."/>
            <person name="Lin J."/>
            <person name="Barber T.D."/>
            <person name="Mandelker D."/>
            <person name="Leary R.J."/>
            <person name="Ptak J."/>
            <person name="Silliman N."/>
            <person name="Szabo S."/>
            <person name="Buckhaults P."/>
            <person name="Farrell C."/>
            <person name="Meeh P."/>
            <person name="Markowitz S.D."/>
            <person name="Willis J."/>
            <person name="Dawson D."/>
            <person name="Willson J.K.V."/>
            <person name="Gazdar A.F."/>
            <person name="Hartigan J."/>
            <person name="Wu L."/>
            <person name="Liu C."/>
            <person name="Parmigiani G."/>
            <person name="Park B.H."/>
            <person name="Bachman K.E."/>
            <person name="Papadopoulos N."/>
            <person name="Vogelstein B."/>
            <person name="Kinzler K.W."/>
            <person name="Velculescu V.E."/>
        </authorList>
    </citation>
    <scope>VARIANT [LARGE SCALE ANALYSIS] ILE-90</scope>
</reference>
<reference key="17">
    <citation type="journal article" date="2013" name="Am. J. Hum. Genet.">
        <title>Recessive and dominant mutations in retinoic acid receptor beta in cases with microphthalmia and diaphragmatic hernia.</title>
        <authorList>
            <person name="Srour M."/>
            <person name="Chitayat D."/>
            <person name="Caron V."/>
            <person name="Chassaing N."/>
            <person name="Bitoun P."/>
            <person name="Patry L."/>
            <person name="Cordier M.P."/>
            <person name="Capo-Chichi J.M."/>
            <person name="Francannet C."/>
            <person name="Calvas P."/>
            <person name="Ragge N."/>
            <person name="Dobrzeniecka S."/>
            <person name="Hamdan F.F."/>
            <person name="Rouleau G.A."/>
            <person name="Tremblay A."/>
            <person name="Michaud J.L."/>
        </authorList>
    </citation>
    <scope>VARIANTS MCOPS12 SER-394 AND CYS-394</scope>
    <scope>CHARACTERIZATION OF VARIANTS MCOPS12 SER-394 AND CYS-394</scope>
</reference>
<reference key="18">
    <citation type="journal article" date="2016" name="Hum. Mutat.">
        <title>Gain-of-function mutations in RARB cause intellectual disability with progressive motor impairment.</title>
        <authorList>
            <person name="Srour M."/>
            <person name="Caron V."/>
            <person name="Pearson T."/>
            <person name="Nielsen S.B."/>
            <person name="Levesque S."/>
            <person name="Delrue M.A."/>
            <person name="Becker T.A."/>
            <person name="Hamdan F.F."/>
            <person name="Kibar Z."/>
            <person name="Sattler S.G."/>
            <person name="Schneider M.C."/>
            <person name="Bitoun P."/>
            <person name="Chassaing N."/>
            <person name="Rosenfeld J.A."/>
            <person name="Xia F."/>
            <person name="Desai S."/>
            <person name="Roeder E."/>
            <person name="Kimonis V."/>
            <person name="Schneider A."/>
            <person name="Littlejohn R.O."/>
            <person name="Douzgou S."/>
            <person name="Tremblay A."/>
            <person name="Michaud J.L."/>
        </authorList>
    </citation>
    <scope>VARIANTS MCOPS12 PRO-220; ALA-303 AND CYS-394</scope>
    <scope>CHARACTERIZATION OF VARIANT MCOPS12 PRO-220; ALA-303; SER-394 AND CYS-394</scope>
</reference>
<organism>
    <name type="scientific">Homo sapiens</name>
    <name type="common">Human</name>
    <dbReference type="NCBI Taxonomy" id="9606"/>
    <lineage>
        <taxon>Eukaryota</taxon>
        <taxon>Metazoa</taxon>
        <taxon>Chordata</taxon>
        <taxon>Craniata</taxon>
        <taxon>Vertebrata</taxon>
        <taxon>Euteleostomi</taxon>
        <taxon>Mammalia</taxon>
        <taxon>Eutheria</taxon>
        <taxon>Euarchontoglires</taxon>
        <taxon>Primates</taxon>
        <taxon>Haplorrhini</taxon>
        <taxon>Catarrhini</taxon>
        <taxon>Hominidae</taxon>
        <taxon>Homo</taxon>
    </lineage>
</organism>
<feature type="chain" id="PRO_0000053467" description="Retinoic acid receptor beta">
    <location>
        <begin position="1"/>
        <end position="455"/>
    </location>
</feature>
<feature type="domain" description="NR LBD" evidence="4">
    <location>
        <begin position="183"/>
        <end position="417"/>
    </location>
</feature>
<feature type="DNA-binding region" description="Nuclear receptor" evidence="3">
    <location>
        <begin position="88"/>
        <end position="153"/>
    </location>
</feature>
<feature type="zinc finger region" description="NR C4-type" evidence="3">
    <location>
        <begin position="88"/>
        <end position="108"/>
    </location>
</feature>
<feature type="zinc finger region" description="NR C4-type" evidence="3">
    <location>
        <begin position="124"/>
        <end position="148"/>
    </location>
</feature>
<feature type="region of interest" description="Modulating">
    <location>
        <begin position="1"/>
        <end position="87"/>
    </location>
</feature>
<feature type="region of interest" description="Disordered" evidence="5">
    <location>
        <begin position="47"/>
        <end position="78"/>
    </location>
</feature>
<feature type="region of interest" description="Hinge">
    <location>
        <begin position="154"/>
        <end position="182"/>
    </location>
</feature>
<feature type="region of interest" description="Disordered" evidence="5">
    <location>
        <begin position="415"/>
        <end position="455"/>
    </location>
</feature>
<feature type="compositionally biased region" description="Polar residues" evidence="5">
    <location>
        <begin position="53"/>
        <end position="66"/>
    </location>
</feature>
<feature type="compositionally biased region" description="Polar residues" evidence="5">
    <location>
        <begin position="424"/>
        <end position="434"/>
    </location>
</feature>
<feature type="compositionally biased region" description="Low complexity" evidence="5">
    <location>
        <begin position="435"/>
        <end position="455"/>
    </location>
</feature>
<feature type="modified residue" description="Phosphoserine" evidence="19">
    <location>
        <position position="77"/>
    </location>
</feature>
<feature type="splice variant" id="VSP_003635" description="In isoform Beta-4." evidence="13">
    <location>
        <begin position="1"/>
        <end position="119"/>
    </location>
</feature>
<feature type="splice variant" id="VSP_003634" description="In isoform Beta-2." evidence="14 15 16">
    <original>MTTSGHACPVPAVNGHMTHYPATPYPLLFPPVIGGLSLPPLHGLHGHPPPSGCSTPSPAT</original>
    <variation>MFDCMDVLSVSPGQILDFYTASPSSCMLQEKALKACFSGLTQTEWQHRHTAQS</variation>
    <location>
        <begin position="1"/>
        <end position="60"/>
    </location>
</feature>
<feature type="sequence variant" id="VAR_036060" description="In a colorectal cancer sample; somatic mutation." evidence="8">
    <original>V</original>
    <variation>I</variation>
    <location>
        <position position="90"/>
    </location>
</feature>
<feature type="sequence variant" id="VAR_077141" description="In MCOPS12; increased transcriptional response to retinoic acid ligands." evidence="10">
    <original>L</original>
    <variation>P</variation>
    <location>
        <position position="220"/>
    </location>
</feature>
<feature type="sequence variant" id="VAR_077142" description="In MCOPS12; increased transcriptional response to retinoic acid ligands." evidence="10">
    <original>G</original>
    <variation>A</variation>
    <location>
        <position position="303"/>
    </location>
</feature>
<feature type="sequence variant" id="VAR_070780" description="In MCOPS12; increased transcriptional response to retinoic acid ligands." evidence="9 10">
    <original>R</original>
    <variation>C</variation>
    <location>
        <position position="394"/>
    </location>
</feature>
<feature type="sequence variant" id="VAR_070781" description="In MCOPS12; increases transcriptional response to retinoic acid." evidence="9">
    <original>R</original>
    <variation>S</variation>
    <location>
        <position position="394"/>
    </location>
</feature>
<feature type="mutagenesis site" description="As a heterodimer with RXRA, abolishes transcriptional repression on DR1, reduces transcriptional activation on DR5 and binding affinity for DR1 and DR5 DNA elements." evidence="12">
    <original>E</original>
    <variation>A</variation>
    <location>
        <position position="106"/>
    </location>
</feature>
<feature type="mutagenesis site" description="As a heterodimer with RXRA, abolishes transcriptional repression on DR1 and reduces transcriptional activation on DR5." evidence="12">
    <original>R</original>
    <variation>A</variation>
    <location>
        <position position="113"/>
    </location>
</feature>
<feature type="mutagenesis site" description="As a heterodimer with RXRA, reduces transcriptional repression on DR1 and reduces transcriptional activation on DR5. Reduces binding affinity for DR1 and DR5 DNA elements; when associated with E-366." evidence="12">
    <original>M</original>
    <variation>E</variation>
    <location>
        <position position="120"/>
    </location>
</feature>
<feature type="mutagenesis site" description="Reduces transcriptional repression on DR1 and reduces transcriptional activation on DR5; when associated with E-369 and E-370.">
    <original>T</original>
    <variation>V</variation>
    <location>
        <position position="123"/>
    </location>
</feature>
<feature type="mutagenesis site" description="No effect on transcriptional activation in the absence of hormone." evidence="6">
    <original>T</original>
    <variation>I</variation>
    <location>
        <position position="188"/>
    </location>
</feature>
<feature type="mutagenesis site" description="No effect on transcriptional activation in the absence of hormone." evidence="6">
    <original>I</original>
    <variation>V</variation>
    <location>
        <position position="191"/>
    </location>
</feature>
<feature type="mutagenesis site" description="Reduced transcriptional activation in the absence of hormone. Even greater reduction in transcriptional activation in the absence of hormone; when associated with D-223 or S-232. Great reduction in transcriptional activation in the absence of hormone; when associated with D-223 and S-232." evidence="6">
    <original>L</original>
    <variation>I</variation>
    <location>
        <position position="222"/>
    </location>
</feature>
<feature type="mutagenesis site" description="Greatly reduced transcriptional activation in the absence of hormone. Even greater reduction in transcriptional activation in the absence of hormone; when associated with I-222 or S-232. Great reduction in transcriptional activation in the absence of hormone; when associated with I-222 and S-232." evidence="6">
    <original>G</original>
    <variation>D</variation>
    <location>
        <position position="223"/>
    </location>
</feature>
<feature type="mutagenesis site" description="Reduced transcriptional activation in the absence of hormone. Some further reduction of transcriptional activity in the absence of hormone; when associated with I-222 or D-223. Great reduction in transcriptional activation in the absence of hormone; when associated with I-222 and D-223." evidence="6">
    <original>A</original>
    <variation>S</variation>
    <location>
        <position position="232"/>
    </location>
</feature>
<feature type="mutagenesis site" description="As a heterodimer with RXRA, reduces transcriptional repression on DR1 and reduces transcriptional activation on DR5. Reduces transcriptional repression on DR1 and reduces transcriptional activation on DR5; when associated with E-366 and E-367." evidence="12">
    <original>K</original>
    <variation>E</variation>
    <location>
        <position position="365"/>
    </location>
</feature>
<feature type="mutagenesis site" description="As a heterodimer with RXRA, reduces binding affinity for DR5 DNA element and no change in binding to DR1. Reduces transcriptional repression on DR1 and reduces transcriptional activation on DR5; when associated with E-365 and E-367. Reduces binding affinity for DR1 and DR5 DNA elements; when associated with E-120." evidence="12">
    <original>R</original>
    <variation>E</variation>
    <location>
        <position position="366"/>
    </location>
</feature>
<feature type="mutagenesis site" description="As a heterodimer with RXRA, reduces transcriptional repression on DR1 and reduces transcriptional activation on DR5. Reduces transcriptional repression on DR1 and reduces transcriptional activation on DR5; when associated with E-365 and E-366." evidence="12">
    <original>R</original>
    <variation>E</variation>
    <location>
        <position position="367"/>
    </location>
</feature>
<feature type="mutagenesis site" description="Reduces transcriptional repression on DR1 and reduces transcriptional activation on DR5; when associated with V-123 and E-370.">
    <original>S</original>
    <variation>E</variation>
    <location>
        <position position="369"/>
    </location>
</feature>
<feature type="mutagenesis site" description="Reduces transcriptional repression on DR1 and reduced transcriptional activation on DR5; when associated with V-123 and E-369.">
    <original>K</original>
    <variation>E</variation>
    <location>
        <position position="370"/>
    </location>
</feature>
<feature type="sequence conflict" description="In Ref. 2; CAA68398." evidence="17" ref="2">
    <original>G</original>
    <variation>A</variation>
    <location>
        <position position="206"/>
    </location>
</feature>
<feature type="sequence conflict" description="In Ref. 1; CAA30262." evidence="17" ref="1">
    <original>L</original>
    <variation>Q</variation>
    <location>
        <position position="317"/>
    </location>
</feature>
<feature type="sequence conflict" description="In Ref. 2; CAA68398." evidence="17" ref="2">
    <original>L</original>
    <variation>M</variation>
    <location>
        <position position="414"/>
    </location>
</feature>
<feature type="sequence conflict" description="In Ref. 1; CAA30262." evidence="17" ref="1">
    <original>V</original>
    <variation>L</variation>
    <location>
        <position position="454"/>
    </location>
</feature>
<feature type="strand" evidence="20">
    <location>
        <begin position="87"/>
        <end position="91"/>
    </location>
</feature>
<feature type="strand" evidence="20">
    <location>
        <begin position="100"/>
        <end position="102"/>
    </location>
</feature>
<feature type="helix" evidence="20">
    <location>
        <begin position="107"/>
        <end position="118"/>
    </location>
</feature>
<feature type="strand" evidence="20">
    <location>
        <begin position="133"/>
        <end position="135"/>
    </location>
</feature>
<feature type="helix" evidence="20">
    <location>
        <begin position="141"/>
        <end position="148"/>
    </location>
</feature>
<feature type="helix" evidence="20">
    <location>
        <begin position="149"/>
        <end position="151"/>
    </location>
</feature>
<feature type="helix" evidence="21">
    <location>
        <begin position="182"/>
        <end position="198"/>
    </location>
</feature>
<feature type="strand" evidence="21">
    <location>
        <begin position="202"/>
        <end position="205"/>
    </location>
</feature>
<feature type="helix" evidence="21">
    <location>
        <begin position="222"/>
        <end position="244"/>
    </location>
</feature>
<feature type="helix" evidence="21">
    <location>
        <begin position="249"/>
        <end position="251"/>
    </location>
</feature>
<feature type="helix" evidence="21">
    <location>
        <begin position="254"/>
        <end position="274"/>
    </location>
</feature>
<feature type="strand" evidence="22">
    <location>
        <begin position="276"/>
        <end position="278"/>
    </location>
</feature>
<feature type="turn" evidence="21">
    <location>
        <begin position="279"/>
        <end position="282"/>
    </location>
</feature>
<feature type="strand" evidence="21">
    <location>
        <begin position="283"/>
        <end position="285"/>
    </location>
</feature>
<feature type="strand" evidence="21">
    <location>
        <begin position="289"/>
        <end position="293"/>
    </location>
</feature>
<feature type="helix" evidence="21">
    <location>
        <begin position="294"/>
        <end position="300"/>
    </location>
</feature>
<feature type="helix" evidence="21">
    <location>
        <begin position="303"/>
        <end position="305"/>
    </location>
</feature>
<feature type="helix" evidence="21">
    <location>
        <begin position="306"/>
        <end position="316"/>
    </location>
</feature>
<feature type="helix" evidence="21">
    <location>
        <begin position="317"/>
        <end position="319"/>
    </location>
</feature>
<feature type="helix" evidence="21">
    <location>
        <begin position="323"/>
        <end position="334"/>
    </location>
</feature>
<feature type="helix" evidence="21">
    <location>
        <begin position="345"/>
        <end position="366"/>
    </location>
</feature>
<feature type="strand" evidence="22">
    <location>
        <begin position="368"/>
        <end position="370"/>
    </location>
</feature>
<feature type="helix" evidence="21">
    <location>
        <begin position="373"/>
        <end position="401"/>
    </location>
</feature>
<feature type="strand" evidence="21">
    <location>
        <begin position="402"/>
        <end position="404"/>
    </location>
</feature>
<feature type="helix" evidence="21">
    <location>
        <begin position="408"/>
        <end position="414"/>
    </location>
</feature>
<keyword id="KW-0002">3D-structure</keyword>
<keyword id="KW-0025">Alternative splicing</keyword>
<keyword id="KW-0963">Cytoplasm</keyword>
<keyword id="KW-0225">Disease variant</keyword>
<keyword id="KW-0238">DNA-binding</keyword>
<keyword id="KW-0479">Metal-binding</keyword>
<keyword id="KW-1013">Microphthalmia</keyword>
<keyword id="KW-0539">Nucleus</keyword>
<keyword id="KW-0597">Phosphoprotein</keyword>
<keyword id="KW-0656">Proto-oncogene</keyword>
<keyword id="KW-0675">Receptor</keyword>
<keyword id="KW-1185">Reference proteome</keyword>
<keyword id="KW-0804">Transcription</keyword>
<keyword id="KW-0805">Transcription regulation</keyword>
<keyword id="KW-0862">Zinc</keyword>
<keyword id="KW-0863">Zinc-finger</keyword>
<protein>
    <recommendedName>
        <fullName>Retinoic acid receptor beta</fullName>
        <shortName>RAR-beta</shortName>
    </recommendedName>
    <alternativeName>
        <fullName>HBV-activated protein</fullName>
    </alternativeName>
    <alternativeName>
        <fullName>Nuclear receptor subfamily 1 group B member 2</fullName>
    </alternativeName>
    <alternativeName>
        <fullName>RAR-epsilon</fullName>
    </alternativeName>
</protein>
<dbReference type="EMBL" id="X07282">
    <property type="protein sequence ID" value="CAA30262.1"/>
    <property type="molecule type" value="mRNA"/>
</dbReference>
<dbReference type="EMBL" id="Y00291">
    <property type="protein sequence ID" value="CAA68398.1"/>
    <property type="molecule type" value="mRNA"/>
</dbReference>
<dbReference type="EMBL" id="AF157483">
    <property type="protein sequence ID" value="AAD45688.1"/>
    <property type="molecule type" value="mRNA"/>
</dbReference>
<dbReference type="EMBL" id="BC060794">
    <property type="protein sequence ID" value="AAH60794.1"/>
    <property type="molecule type" value="mRNA"/>
</dbReference>
<dbReference type="EMBL" id="X56849">
    <property type="status" value="NOT_ANNOTATED_CDS"/>
    <property type="molecule type" value="Genomic_DNA"/>
</dbReference>
<dbReference type="EMBL" id="X77664">
    <property type="protein sequence ID" value="CAA54740.1"/>
    <property type="molecule type" value="Genomic_DNA"/>
</dbReference>
<dbReference type="EMBL" id="X04014">
    <property type="protein sequence ID" value="CAA27637.1"/>
    <property type="status" value="ALT_SEQ"/>
    <property type="molecule type" value="Genomic_DNA"/>
</dbReference>
<dbReference type="EMBL" id="M57445">
    <property type="protein sequence ID" value="AAA58728.1"/>
    <property type="molecule type" value="Genomic_DNA"/>
</dbReference>
<dbReference type="CCDS" id="CCDS2642.1">
    <molecule id="P10826-2"/>
</dbReference>
<dbReference type="CCDS" id="CCDS46775.1">
    <molecule id="P10826-3"/>
</dbReference>
<dbReference type="CCDS" id="CCDS93227.1">
    <molecule id="P10826-1"/>
</dbReference>
<dbReference type="PIR" id="S02827">
    <property type="entry name" value="S02827"/>
</dbReference>
<dbReference type="PIR" id="S49021">
    <property type="entry name" value="S49021"/>
</dbReference>
<dbReference type="RefSeq" id="NP_000956.2">
    <molecule id="P10826-2"/>
    <property type="nucleotide sequence ID" value="NM_000965.4"/>
</dbReference>
<dbReference type="RefSeq" id="NP_001277145.1">
    <molecule id="P10826-1"/>
    <property type="nucleotide sequence ID" value="NM_001290216.3"/>
</dbReference>
<dbReference type="RefSeq" id="NP_001277146.1">
    <molecule id="P10826-3"/>
    <property type="nucleotide sequence ID" value="NM_001290217.2"/>
</dbReference>
<dbReference type="RefSeq" id="NP_001277195.1">
    <property type="nucleotide sequence ID" value="NM_001290266.1"/>
</dbReference>
<dbReference type="RefSeq" id="NP_001277205.1">
    <molecule id="P10826-3"/>
    <property type="nucleotide sequence ID" value="NM_001290276.2"/>
</dbReference>
<dbReference type="RefSeq" id="NP_057236.1">
    <molecule id="P10826-3"/>
    <property type="nucleotide sequence ID" value="NM_016152.4"/>
</dbReference>
<dbReference type="PDB" id="1HRA">
    <property type="method" value="NMR"/>
    <property type="chains" value="A=82-160"/>
</dbReference>
<dbReference type="PDB" id="1XAP">
    <property type="method" value="X-ray"/>
    <property type="resolution" value="2.10 A"/>
    <property type="chains" value="A=176-421"/>
</dbReference>
<dbReference type="PDB" id="4DM6">
    <property type="method" value="X-ray"/>
    <property type="resolution" value="1.90 A"/>
    <property type="chains" value="A/B=176-421"/>
</dbReference>
<dbReference type="PDB" id="4DM8">
    <property type="method" value="X-ray"/>
    <property type="resolution" value="2.30 A"/>
    <property type="chains" value="A/B=176-421"/>
</dbReference>
<dbReference type="PDB" id="4JYG">
    <property type="method" value="X-ray"/>
    <property type="resolution" value="2.35 A"/>
    <property type="chains" value="A/B=176-421"/>
</dbReference>
<dbReference type="PDB" id="4JYH">
    <property type="method" value="X-ray"/>
    <property type="resolution" value="2.60 A"/>
    <property type="chains" value="A/B=176-421"/>
</dbReference>
<dbReference type="PDB" id="4JYI">
    <property type="method" value="X-ray"/>
    <property type="resolution" value="1.90 A"/>
    <property type="chains" value="A/B=176-421"/>
</dbReference>
<dbReference type="PDB" id="5UAN">
    <property type="method" value="X-ray"/>
    <property type="resolution" value="3.51 A"/>
    <property type="chains" value="B=80-455"/>
</dbReference>
<dbReference type="PDB" id="6SSQ">
    <property type="method" value="X-ray"/>
    <property type="resolution" value="2.30 A"/>
    <property type="chains" value="A/B=176-421"/>
</dbReference>
<dbReference type="PDBsum" id="1HRA"/>
<dbReference type="PDBsum" id="1XAP"/>
<dbReference type="PDBsum" id="4DM6"/>
<dbReference type="PDBsum" id="4DM8"/>
<dbReference type="PDBsum" id="4JYG"/>
<dbReference type="PDBsum" id="4JYH"/>
<dbReference type="PDBsum" id="4JYI"/>
<dbReference type="PDBsum" id="5UAN"/>
<dbReference type="PDBsum" id="6SSQ"/>
<dbReference type="SMR" id="P10826"/>
<dbReference type="BioGRID" id="111850">
    <property type="interactions" value="27"/>
</dbReference>
<dbReference type="CORUM" id="P10826"/>
<dbReference type="FunCoup" id="P10826">
    <property type="interactions" value="1927"/>
</dbReference>
<dbReference type="IntAct" id="P10826">
    <property type="interactions" value="24"/>
</dbReference>
<dbReference type="MINT" id="P10826"/>
<dbReference type="STRING" id="9606.ENSP00000332296"/>
<dbReference type="BindingDB" id="P10826"/>
<dbReference type="ChEMBL" id="CHEMBL2008"/>
<dbReference type="DrugBank" id="DB00459">
    <property type="generic name" value="Acitretin"/>
</dbReference>
<dbReference type="DrugBank" id="DB00210">
    <property type="generic name" value="Adapalene"/>
</dbReference>
<dbReference type="DrugBank" id="DB00523">
    <property type="generic name" value="Alitretinoin"/>
</dbReference>
<dbReference type="DrugBank" id="DB02877">
    <property type="generic name" value="Arotinoid acid"/>
</dbReference>
<dbReference type="DrugBank" id="DB00926">
    <property type="generic name" value="Etretinate"/>
</dbReference>
<dbReference type="DrugBank" id="DB05785">
    <property type="generic name" value="LGD-1550"/>
</dbReference>
<dbReference type="DrugBank" id="DB04942">
    <property type="generic name" value="Tamibarotene"/>
</dbReference>
<dbReference type="DrugBank" id="DB00799">
    <property type="generic name" value="Tazarotene"/>
</dbReference>
<dbReference type="DrugBank" id="DB00755">
    <property type="generic name" value="Tretinoin"/>
</dbReference>
<dbReference type="DrugBank" id="DB12808">
    <property type="generic name" value="Trifarotene"/>
</dbReference>
<dbReference type="DrugCentral" id="P10826"/>
<dbReference type="GuidetoPHARMACOLOGY" id="591"/>
<dbReference type="GlyCosmos" id="P10826">
    <property type="glycosylation" value="1 site, 2 glycans"/>
</dbReference>
<dbReference type="GlyGen" id="P10826">
    <property type="glycosylation" value="1 site, 2 O-linked glycans (1 site)"/>
</dbReference>
<dbReference type="iPTMnet" id="P10826"/>
<dbReference type="PhosphoSitePlus" id="P10826"/>
<dbReference type="BioMuta" id="RARB"/>
<dbReference type="DMDM" id="17380507"/>
<dbReference type="jPOST" id="P10826"/>
<dbReference type="MassIVE" id="P10826"/>
<dbReference type="PaxDb" id="9606-ENSP00000332296"/>
<dbReference type="PeptideAtlas" id="P10826"/>
<dbReference type="ProteomicsDB" id="52654">
    <molecule id="P10826-1"/>
</dbReference>
<dbReference type="ProteomicsDB" id="52655">
    <molecule id="P10826-2"/>
</dbReference>
<dbReference type="ProteomicsDB" id="52656">
    <molecule id="P10826-3"/>
</dbReference>
<dbReference type="Antibodypedia" id="934">
    <property type="antibodies" value="517 antibodies from 43 providers"/>
</dbReference>
<dbReference type="DNASU" id="5915"/>
<dbReference type="Ensembl" id="ENST00000330688.9">
    <molecule id="P10826-2"/>
    <property type="protein sequence ID" value="ENSP00000332296.4"/>
    <property type="gene ID" value="ENSG00000077092.20"/>
</dbReference>
<dbReference type="Ensembl" id="ENST00000383772.9">
    <molecule id="P10826-1"/>
    <property type="protein sequence ID" value="ENSP00000373282.5"/>
    <property type="gene ID" value="ENSG00000077092.20"/>
</dbReference>
<dbReference type="Ensembl" id="ENST00000437042.7">
    <molecule id="P10826-3"/>
    <property type="protein sequence ID" value="ENSP00000398840.2"/>
    <property type="gene ID" value="ENSG00000077092.20"/>
</dbReference>
<dbReference type="Ensembl" id="ENST00000458646.2">
    <molecule id="P10826-3"/>
    <property type="protein sequence ID" value="ENSP00000391391.1"/>
    <property type="gene ID" value="ENSG00000077092.20"/>
</dbReference>
<dbReference type="Ensembl" id="ENST00000686715.1">
    <molecule id="P10826-1"/>
    <property type="protein sequence ID" value="ENSP00000510539.1"/>
    <property type="gene ID" value="ENSG00000077092.20"/>
</dbReference>
<dbReference type="Ensembl" id="ENST00000687353.1">
    <molecule id="P10826-1"/>
    <property type="protein sequence ID" value="ENSP00000508588.1"/>
    <property type="gene ID" value="ENSG00000077092.20"/>
</dbReference>
<dbReference type="Ensembl" id="ENST00000687676.1">
    <molecule id="P10826-1"/>
    <property type="protein sequence ID" value="ENSP00000510313.1"/>
    <property type="gene ID" value="ENSG00000077092.20"/>
</dbReference>
<dbReference type="Ensembl" id="ENST00000688892.1">
    <molecule id="P10826-1"/>
    <property type="protein sequence ID" value="ENSP00000510650.1"/>
    <property type="gene ID" value="ENSG00000077092.20"/>
</dbReference>
<dbReference type="Ensembl" id="ENST00000693261.1">
    <molecule id="P10826-3"/>
    <property type="protein sequence ID" value="ENSP00000508421.1"/>
    <property type="gene ID" value="ENSG00000077092.20"/>
</dbReference>
<dbReference type="GeneID" id="5915"/>
<dbReference type="KEGG" id="hsa:5915"/>
<dbReference type="MANE-Select" id="ENST00000330688.9">
    <molecule id="P10826-2"/>
    <property type="protein sequence ID" value="ENSP00000332296.4"/>
    <property type="RefSeq nucleotide sequence ID" value="NM_000965.5"/>
    <property type="RefSeq protein sequence ID" value="NP_000956.2"/>
</dbReference>
<dbReference type="UCSC" id="uc003cdh.4">
    <molecule id="P10826-1"/>
    <property type="organism name" value="human"/>
</dbReference>
<dbReference type="AGR" id="HGNC:9865"/>
<dbReference type="CTD" id="5915"/>
<dbReference type="DisGeNET" id="5915"/>
<dbReference type="GeneCards" id="RARB"/>
<dbReference type="HGNC" id="HGNC:9865">
    <property type="gene designation" value="RARB"/>
</dbReference>
<dbReference type="HPA" id="ENSG00000077092">
    <property type="expression patterns" value="Low tissue specificity"/>
</dbReference>
<dbReference type="MalaCards" id="RARB"/>
<dbReference type="MIM" id="180220">
    <property type="type" value="gene"/>
</dbReference>
<dbReference type="MIM" id="615524">
    <property type="type" value="phenotype"/>
</dbReference>
<dbReference type="neXtProt" id="NX_P10826"/>
<dbReference type="OpenTargets" id="ENSG00000077092"/>
<dbReference type="Orphanet" id="689829">
    <property type="disease" value="Microphthalmia-motor delay-language delay-brain anomalies-diaphragmatic hernia syndrome"/>
</dbReference>
<dbReference type="PharmGKB" id="PA34226"/>
<dbReference type="VEuPathDB" id="HostDB:ENSG00000077092"/>
<dbReference type="eggNOG" id="KOG3575">
    <property type="taxonomic scope" value="Eukaryota"/>
</dbReference>
<dbReference type="GeneTree" id="ENSGT00940000156196"/>
<dbReference type="HOGENOM" id="CLU_007368_18_0_1"/>
<dbReference type="InParanoid" id="P10826"/>
<dbReference type="OMA" id="TDWQHRH"/>
<dbReference type="OrthoDB" id="6081310at2759"/>
<dbReference type="PAN-GO" id="P10826">
    <property type="GO annotations" value="7 GO annotations based on evolutionary models"/>
</dbReference>
<dbReference type="PhylomeDB" id="P10826"/>
<dbReference type="TreeFam" id="TF328382"/>
<dbReference type="PathwayCommons" id="P10826"/>
<dbReference type="Reactome" id="R-HSA-383280">
    <property type="pathway name" value="Nuclear Receptor transcription pathway"/>
</dbReference>
<dbReference type="Reactome" id="R-HSA-5362517">
    <property type="pathway name" value="Signaling by Retinoic Acid"/>
</dbReference>
<dbReference type="Reactome" id="R-HSA-5617472">
    <property type="pathway name" value="Activation of anterior HOX genes in hindbrain development during early embryogenesis"/>
</dbReference>
<dbReference type="SignaLink" id="P10826"/>
<dbReference type="SIGNOR" id="P10826"/>
<dbReference type="BioGRID-ORCS" id="5915">
    <property type="hits" value="15 hits in 1188 CRISPR screens"/>
</dbReference>
<dbReference type="ChiTaRS" id="RARB">
    <property type="organism name" value="human"/>
</dbReference>
<dbReference type="EvolutionaryTrace" id="P10826"/>
<dbReference type="GeneWiki" id="Retinoic_acid_receptor_beta"/>
<dbReference type="GenomeRNAi" id="5915"/>
<dbReference type="Pharos" id="P10826">
    <property type="development level" value="Tclin"/>
</dbReference>
<dbReference type="PRO" id="PR:P10826"/>
<dbReference type="Proteomes" id="UP000005640">
    <property type="component" value="Chromosome 3"/>
</dbReference>
<dbReference type="RNAct" id="P10826">
    <property type="molecule type" value="protein"/>
</dbReference>
<dbReference type="Bgee" id="ENSG00000077092">
    <property type="expression patterns" value="Expressed in choroid plexus epithelium and 140 other cell types or tissues"/>
</dbReference>
<dbReference type="ExpressionAtlas" id="P10826">
    <property type="expression patterns" value="baseline and differential"/>
</dbReference>
<dbReference type="GO" id="GO:0000785">
    <property type="term" value="C:chromatin"/>
    <property type="evidence" value="ECO:0000247"/>
    <property type="project" value="NTNU_SB"/>
</dbReference>
<dbReference type="GO" id="GO:0005737">
    <property type="term" value="C:cytoplasm"/>
    <property type="evidence" value="ECO:0007669"/>
    <property type="project" value="UniProtKB-SubCell"/>
</dbReference>
<dbReference type="GO" id="GO:0005654">
    <property type="term" value="C:nucleoplasm"/>
    <property type="evidence" value="ECO:0000314"/>
    <property type="project" value="HPA"/>
</dbReference>
<dbReference type="GO" id="GO:0005634">
    <property type="term" value="C:nucleus"/>
    <property type="evidence" value="ECO:0000314"/>
    <property type="project" value="UniProtKB"/>
</dbReference>
<dbReference type="GO" id="GO:0003677">
    <property type="term" value="F:DNA binding"/>
    <property type="evidence" value="ECO:0000304"/>
    <property type="project" value="ProtInc"/>
</dbReference>
<dbReference type="GO" id="GO:0000981">
    <property type="term" value="F:DNA-binding transcription factor activity, RNA polymerase II-specific"/>
    <property type="evidence" value="ECO:0000247"/>
    <property type="project" value="NTNU_SB"/>
</dbReference>
<dbReference type="GO" id="GO:1901363">
    <property type="term" value="F:heterocyclic compound binding"/>
    <property type="evidence" value="ECO:0007669"/>
    <property type="project" value="Ensembl"/>
</dbReference>
<dbReference type="GO" id="GO:0004879">
    <property type="term" value="F:nuclear receptor activity"/>
    <property type="evidence" value="ECO:0000318"/>
    <property type="project" value="GO_Central"/>
</dbReference>
<dbReference type="GO" id="GO:0046965">
    <property type="term" value="F:nuclear retinoid X receptor binding"/>
    <property type="evidence" value="ECO:0007669"/>
    <property type="project" value="Ensembl"/>
</dbReference>
<dbReference type="GO" id="GO:0044877">
    <property type="term" value="F:protein-containing complex binding"/>
    <property type="evidence" value="ECO:0007669"/>
    <property type="project" value="Ensembl"/>
</dbReference>
<dbReference type="GO" id="GO:0000978">
    <property type="term" value="F:RNA polymerase II cis-regulatory region sequence-specific DNA binding"/>
    <property type="evidence" value="ECO:0000318"/>
    <property type="project" value="GO_Central"/>
</dbReference>
<dbReference type="GO" id="GO:1990837">
    <property type="term" value="F:sequence-specific double-stranded DNA binding"/>
    <property type="evidence" value="ECO:0000314"/>
    <property type="project" value="ARUK-UCL"/>
</dbReference>
<dbReference type="GO" id="GO:0008270">
    <property type="term" value="F:zinc ion binding"/>
    <property type="evidence" value="ECO:0007669"/>
    <property type="project" value="UniProtKB-KW"/>
</dbReference>
<dbReference type="GO" id="GO:0006915">
    <property type="term" value="P:apoptotic process"/>
    <property type="evidence" value="ECO:0007669"/>
    <property type="project" value="Ensembl"/>
</dbReference>
<dbReference type="GO" id="GO:0030154">
    <property type="term" value="P:cell differentiation"/>
    <property type="evidence" value="ECO:0000318"/>
    <property type="project" value="GO_Central"/>
</dbReference>
<dbReference type="GO" id="GO:0048566">
    <property type="term" value="P:embryonic digestive tract development"/>
    <property type="evidence" value="ECO:0000315"/>
    <property type="project" value="DFLAT"/>
</dbReference>
<dbReference type="GO" id="GO:0048048">
    <property type="term" value="P:embryonic eye morphogenesis"/>
    <property type="evidence" value="ECO:0007669"/>
    <property type="project" value="Ensembl"/>
</dbReference>
<dbReference type="GO" id="GO:0035116">
    <property type="term" value="P:embryonic hindlimb morphogenesis"/>
    <property type="evidence" value="ECO:0007669"/>
    <property type="project" value="Ensembl"/>
</dbReference>
<dbReference type="GO" id="GO:0002068">
    <property type="term" value="P:glandular epithelial cell development"/>
    <property type="evidence" value="ECO:0007669"/>
    <property type="project" value="Ensembl"/>
</dbReference>
<dbReference type="GO" id="GO:0003417">
    <property type="term" value="P:growth plate cartilage development"/>
    <property type="evidence" value="ECO:0007669"/>
    <property type="project" value="Ensembl"/>
</dbReference>
<dbReference type="GO" id="GO:0035264">
    <property type="term" value="P:multicellular organism growth"/>
    <property type="evidence" value="ECO:0007669"/>
    <property type="project" value="Ensembl"/>
</dbReference>
<dbReference type="GO" id="GO:0043066">
    <property type="term" value="P:negative regulation of apoptotic process"/>
    <property type="evidence" value="ECO:0007669"/>
    <property type="project" value="Ensembl"/>
</dbReference>
<dbReference type="GO" id="GO:0032331">
    <property type="term" value="P:negative regulation of chondrocyte differentiation"/>
    <property type="evidence" value="ECO:0007669"/>
    <property type="project" value="Ensembl"/>
</dbReference>
<dbReference type="GO" id="GO:2000647">
    <property type="term" value="P:negative regulation of stem cell proliferation"/>
    <property type="evidence" value="ECO:0007669"/>
    <property type="project" value="Ensembl"/>
</dbReference>
<dbReference type="GO" id="GO:0000122">
    <property type="term" value="P:negative regulation of transcription by RNA polymerase II"/>
    <property type="evidence" value="ECO:0000318"/>
    <property type="project" value="GO_Central"/>
</dbReference>
<dbReference type="GO" id="GO:0061351">
    <property type="term" value="P:neural precursor cell proliferation"/>
    <property type="evidence" value="ECO:0007669"/>
    <property type="project" value="Ensembl"/>
</dbReference>
<dbReference type="GO" id="GO:0022008">
    <property type="term" value="P:neurogenesis"/>
    <property type="evidence" value="ECO:0007669"/>
    <property type="project" value="Ensembl"/>
</dbReference>
<dbReference type="GO" id="GO:0003148">
    <property type="term" value="P:outflow tract septum morphogenesis"/>
    <property type="evidence" value="ECO:0007669"/>
    <property type="project" value="Ensembl"/>
</dbReference>
<dbReference type="GO" id="GO:0043065">
    <property type="term" value="P:positive regulation of apoptotic process"/>
    <property type="evidence" value="ECO:0007669"/>
    <property type="project" value="Ensembl"/>
</dbReference>
<dbReference type="GO" id="GO:0045944">
    <property type="term" value="P:positive regulation of transcription by RNA polymerase II"/>
    <property type="evidence" value="ECO:0000318"/>
    <property type="project" value="GO_Central"/>
</dbReference>
<dbReference type="GO" id="GO:0031641">
    <property type="term" value="P:regulation of myelination"/>
    <property type="evidence" value="ECO:0007669"/>
    <property type="project" value="Ensembl"/>
</dbReference>
<dbReference type="GO" id="GO:0048384">
    <property type="term" value="P:retinoic acid receptor signaling pathway"/>
    <property type="evidence" value="ECO:0000318"/>
    <property type="project" value="GO_Central"/>
</dbReference>
<dbReference type="GO" id="GO:0007165">
    <property type="term" value="P:signal transduction"/>
    <property type="evidence" value="ECO:0000304"/>
    <property type="project" value="ProtInc"/>
</dbReference>
<dbReference type="GO" id="GO:0072089">
    <property type="term" value="P:stem cell proliferation"/>
    <property type="evidence" value="ECO:0007669"/>
    <property type="project" value="Ensembl"/>
</dbReference>
<dbReference type="GO" id="GO:0021756">
    <property type="term" value="P:striatum development"/>
    <property type="evidence" value="ECO:0007669"/>
    <property type="project" value="Ensembl"/>
</dbReference>
<dbReference type="GO" id="GO:0001657">
    <property type="term" value="P:ureteric bud development"/>
    <property type="evidence" value="ECO:0007669"/>
    <property type="project" value="Ensembl"/>
</dbReference>
<dbReference type="GO" id="GO:0055012">
    <property type="term" value="P:ventricular cardiac muscle cell differentiation"/>
    <property type="evidence" value="ECO:0007669"/>
    <property type="project" value="Ensembl"/>
</dbReference>
<dbReference type="CDD" id="cd06964">
    <property type="entry name" value="NR_DBD_RAR"/>
    <property type="match status" value="1"/>
</dbReference>
<dbReference type="CDD" id="cd06937">
    <property type="entry name" value="NR_LBD_RAR"/>
    <property type="match status" value="1"/>
</dbReference>
<dbReference type="FunFam" id="1.10.565.10:FF:000073">
    <property type="entry name" value="Retinoic acid receptor beta"/>
    <property type="match status" value="1"/>
</dbReference>
<dbReference type="FunFam" id="3.30.50.10:FF:000004">
    <property type="entry name" value="Retinoic acid receptor beta isoform"/>
    <property type="match status" value="1"/>
</dbReference>
<dbReference type="Gene3D" id="3.30.50.10">
    <property type="entry name" value="Erythroid Transcription Factor GATA-1, subunit A"/>
    <property type="match status" value="1"/>
</dbReference>
<dbReference type="Gene3D" id="1.10.565.10">
    <property type="entry name" value="Retinoid X Receptor"/>
    <property type="match status" value="1"/>
</dbReference>
<dbReference type="IDEAL" id="IID00439"/>
<dbReference type="InterPro" id="IPR035500">
    <property type="entry name" value="NHR-like_dom_sf"/>
</dbReference>
<dbReference type="InterPro" id="IPR047159">
    <property type="entry name" value="NR_DBD_RAR"/>
</dbReference>
<dbReference type="InterPro" id="IPR047158">
    <property type="entry name" value="NR_LBD_RAR"/>
</dbReference>
<dbReference type="InterPro" id="IPR000536">
    <property type="entry name" value="Nucl_hrmn_rcpt_lig-bd"/>
</dbReference>
<dbReference type="InterPro" id="IPR001723">
    <property type="entry name" value="Nuclear_hrmn_rcpt"/>
</dbReference>
<dbReference type="InterPro" id="IPR003078">
    <property type="entry name" value="Retinoic_acid_rcpt"/>
</dbReference>
<dbReference type="InterPro" id="IPR001628">
    <property type="entry name" value="Znf_hrmn_rcpt"/>
</dbReference>
<dbReference type="InterPro" id="IPR013088">
    <property type="entry name" value="Znf_NHR/GATA"/>
</dbReference>
<dbReference type="PANTHER" id="PTHR24085">
    <property type="entry name" value="NUCLEAR HORMONE RECEPTOR"/>
    <property type="match status" value="1"/>
</dbReference>
<dbReference type="PANTHER" id="PTHR24085:SF5">
    <property type="entry name" value="RETINOIC ACID RECEPTOR BETA"/>
    <property type="match status" value="1"/>
</dbReference>
<dbReference type="Pfam" id="PF00104">
    <property type="entry name" value="Hormone_recep"/>
    <property type="match status" value="1"/>
</dbReference>
<dbReference type="Pfam" id="PF00105">
    <property type="entry name" value="zf-C4"/>
    <property type="match status" value="1"/>
</dbReference>
<dbReference type="PRINTS" id="PR01292">
    <property type="entry name" value="RETNOICACIDR"/>
</dbReference>
<dbReference type="PRINTS" id="PR00398">
    <property type="entry name" value="STRDHORMONER"/>
</dbReference>
<dbReference type="PRINTS" id="PR00047">
    <property type="entry name" value="STROIDFINGER"/>
</dbReference>
<dbReference type="SMART" id="SM00430">
    <property type="entry name" value="HOLI"/>
    <property type="match status" value="1"/>
</dbReference>
<dbReference type="SMART" id="SM00399">
    <property type="entry name" value="ZnF_C4"/>
    <property type="match status" value="1"/>
</dbReference>
<dbReference type="SUPFAM" id="SSF57716">
    <property type="entry name" value="Glucocorticoid receptor-like (DNA-binding domain)"/>
    <property type="match status" value="1"/>
</dbReference>
<dbReference type="SUPFAM" id="SSF48508">
    <property type="entry name" value="Nuclear receptor ligand-binding domain"/>
    <property type="match status" value="1"/>
</dbReference>
<dbReference type="PROSITE" id="PS51843">
    <property type="entry name" value="NR_LBD"/>
    <property type="match status" value="1"/>
</dbReference>
<dbReference type="PROSITE" id="PS00031">
    <property type="entry name" value="NUCLEAR_REC_DBD_1"/>
    <property type="match status" value="1"/>
</dbReference>
<dbReference type="PROSITE" id="PS51030">
    <property type="entry name" value="NUCLEAR_REC_DBD_2"/>
    <property type="match status" value="1"/>
</dbReference>
<accession>P10826</accession>
<accession>P12891</accession>
<accession>Q00989</accession>
<accession>Q15298</accession>
<accession>Q9UN48</accession>
<sequence>MTTSGHACPVPAVNGHMTHYPATPYPLLFPPVIGGLSLPPLHGLHGHPPPSGCSTPSPATIETQSTSSEELVPSPPSPLPPPRVYKPCFVCQDKSSGYHYGVSACEGCKGFFRRSIQKNMIYTCHRDKNCVINKVTRNRCQYCRLQKCFEVGMSKESVRNDRNKKKKETSKQECTESYEMTAELDDLTEKIRKAHQETFPSLCQLGKYTTNSSADHRVRLDLGLWDKFSELATKCIIKIVEFAKRLPGFTGLTIADQITLLKAACLDILILRICTRYTPEQDTMTFSDGLTLNRTQMHNAGFGPLTDLVFTFANQLLPLEMDDTETGLLSAICLICGDRQDLEEPTKVDKLQEPLLEALKIYIRKRRPSKPHMFPKILMKITDLRSISAKGAERVITLKMEIPGSMPPLIQEMLENSEGHEPLTPSSSGNTAEHSPSISPSSVENSGVSQSPLVQ</sequence>
<name>RARB_HUMAN</name>
<gene>
    <name type="primary">RARB</name>
    <name type="synonym">HAP</name>
    <name type="synonym">NR1B2</name>
</gene>
<evidence type="ECO:0000250" key="1">
    <source>
        <dbReference type="UniProtKB" id="P22605"/>
    </source>
</evidence>
<evidence type="ECO:0000250" key="2">
    <source>
        <dbReference type="UniProtKB" id="P28702"/>
    </source>
</evidence>
<evidence type="ECO:0000255" key="3">
    <source>
        <dbReference type="PROSITE-ProRule" id="PRU00407"/>
    </source>
</evidence>
<evidence type="ECO:0000255" key="4">
    <source>
        <dbReference type="PROSITE-ProRule" id="PRU01189"/>
    </source>
</evidence>
<evidence type="ECO:0000256" key="5">
    <source>
        <dbReference type="SAM" id="MobiDB-lite"/>
    </source>
</evidence>
<evidence type="ECO:0000269" key="6">
    <source>
    </source>
</evidence>
<evidence type="ECO:0000269" key="7">
    <source>
    </source>
</evidence>
<evidence type="ECO:0000269" key="8">
    <source>
    </source>
</evidence>
<evidence type="ECO:0000269" key="9">
    <source>
    </source>
</evidence>
<evidence type="ECO:0000269" key="10">
    <source>
    </source>
</evidence>
<evidence type="ECO:0000269" key="11">
    <source>
    </source>
</evidence>
<evidence type="ECO:0000269" key="12">
    <source>
    </source>
</evidence>
<evidence type="ECO:0000303" key="13">
    <source>
    </source>
</evidence>
<evidence type="ECO:0000303" key="14">
    <source>
    </source>
</evidence>
<evidence type="ECO:0000303" key="15">
    <source>
    </source>
</evidence>
<evidence type="ECO:0000303" key="16">
    <source>
    </source>
</evidence>
<evidence type="ECO:0000305" key="17"/>
<evidence type="ECO:0007744" key="18">
    <source>
        <dbReference type="PDB" id="5UAN"/>
    </source>
</evidence>
<evidence type="ECO:0007744" key="19">
    <source>
    </source>
</evidence>
<evidence type="ECO:0007829" key="20">
    <source>
        <dbReference type="PDB" id="1HRA"/>
    </source>
</evidence>
<evidence type="ECO:0007829" key="21">
    <source>
        <dbReference type="PDB" id="4DM6"/>
    </source>
</evidence>
<evidence type="ECO:0007829" key="22">
    <source>
        <dbReference type="PDB" id="4JYG"/>
    </source>
</evidence>
<comment type="function">
    <text evidence="1 6 12">Receptor for retinoic acid. Retinoic acid receptors bind as heterodimers to their target response elements in response to their ligands, all-trans or 9-cis retinoic acid, and regulate gene expression in various biological processes. The RXR/RAR heterodimers bind to the retinoic acid response elements (RARE) composed of tandem 5'-AGGTCA-3' sites known as DR1-DR5. In the absence or presence of hormone ligand, acts mainly as an activator of gene expression due to weak binding to corepressors (PubMed:12554770). The RXRA/RARB heterodimer can act as a repressor on the DR1 element and as an activator on the DR5 element (PubMed:29021580). In concert with RARG, required for skeletal growth, matrix homeostasis and growth plate function (By similarity).</text>
</comment>
<comment type="subunit">
    <text evidence="2 6 12">Homodimer (By similarity). Heterodimer; with a RXR molecule (By similarity). Binds DNA preferentially as a RAR/RXR heterodimer (By similarity). Heterodimerizes (via NR LBD) with RXRA (PubMed:29021580). Interacts weakly with NCOR2 (PubMed:12554770).</text>
</comment>
<comment type="interaction">
    <interactant intactId="EBI-8583223">
        <id>P10826-2</id>
    </interactant>
    <interactant intactId="EBI-748961">
        <id>O95273</id>
        <label>CCNDBP1</label>
    </interactant>
    <organismsDiffer>false</organismsDiffer>
    <experiments>3</experiments>
</comment>
<comment type="interaction">
    <interactant intactId="EBI-8583223">
        <id>P10826-2</id>
    </interactant>
    <interactant intactId="EBI-748397">
        <id>P50222</id>
        <label>MEOX2</label>
    </interactant>
    <organismsDiffer>false</organismsDiffer>
    <experiments>3</experiments>
</comment>
<comment type="interaction">
    <interactant intactId="EBI-8583223">
        <id>P10826-2</id>
    </interactant>
    <interactant intactId="EBI-765486">
        <id>Q9UBK2</id>
        <label>PPARGC1A</label>
    </interactant>
    <organismsDiffer>false</organismsDiffer>
    <experiments>3</experiments>
</comment>
<comment type="interaction">
    <interactant intactId="EBI-8583223">
        <id>P10826-2</id>
    </interactant>
    <interactant intactId="EBI-357745">
        <id>P62195</id>
        <label>PSMC5</label>
    </interactant>
    <organismsDiffer>false</organismsDiffer>
    <experiments>3</experiments>
</comment>
<comment type="interaction">
    <interactant intactId="EBI-8583223">
        <id>P10826-2</id>
    </interactant>
    <interactant intactId="EBI-748576">
        <id>P28702</id>
        <label>RXRB</label>
    </interactant>
    <organismsDiffer>false</organismsDiffer>
    <experiments>10</experiments>
</comment>
<comment type="interaction">
    <interactant intactId="EBI-8583223">
        <id>P10826-2</id>
    </interactant>
    <interactant intactId="EBI-16429492">
        <id>P28702-3</id>
        <label>RXRB</label>
    </interactant>
    <organismsDiffer>false</organismsDiffer>
    <experiments>3</experiments>
</comment>
<comment type="interaction">
    <interactant intactId="EBI-8583223">
        <id>P10826-2</id>
    </interactant>
    <interactant intactId="EBI-712405">
        <id>P48443</id>
        <label>RXRG</label>
    </interactant>
    <organismsDiffer>false</organismsDiffer>
    <experiments>7</experiments>
</comment>
<comment type="interaction">
    <interactant intactId="EBI-8583223">
        <id>P10826-2</id>
    </interactant>
    <interactant intactId="EBI-2603114">
        <id>P03255</id>
    </interactant>
    <organismsDiffer>true</organismsDiffer>
    <experiments>2</experiments>
</comment>
<comment type="subcellular location">
    <subcellularLocation>
        <location evidence="11">Nucleus</location>
    </subcellularLocation>
    <subcellularLocation>
        <location evidence="11">Cytoplasm</location>
    </subcellularLocation>
</comment>
<comment type="subcellular location">
    <molecule>Isoform Beta-1</molecule>
    <subcellularLocation>
        <location>Nucleus</location>
    </subcellularLocation>
</comment>
<comment type="subcellular location">
    <molecule>Isoform Beta-2</molecule>
    <subcellularLocation>
        <location>Nucleus</location>
    </subcellularLocation>
</comment>
<comment type="subcellular location">
    <molecule>Isoform Beta-4</molecule>
    <subcellularLocation>
        <location>Cytoplasm</location>
    </subcellularLocation>
</comment>
<comment type="alternative products">
    <event type="alternative splicing"/>
    <isoform>
        <id>P10826-1</id>
        <name>Beta-1</name>
        <sequence type="displayed"/>
    </isoform>
    <isoform>
        <id>P10826-2</id>
        <name>Beta-2</name>
        <sequence type="described" ref="VSP_003634"/>
    </isoform>
    <isoform>
        <id>P10826-4</id>
        <name>Beta-3</name>
        <sequence type="not described"/>
    </isoform>
    <isoform>
        <id>P10826-3</id>
        <name>Beta-4</name>
        <sequence type="described" ref="VSP_003635"/>
    </isoform>
</comment>
<comment type="tissue specificity">
    <text evidence="11">Expressed in aortic endothelial cells (at protein level).</text>
</comment>
<comment type="domain">
    <text>Composed of three domains: a modulating N-terminal domain, a DNA-binding domain and a C-terminal ligand-binding domain.</text>
</comment>
<comment type="domain">
    <text evidence="7">The DNA-binding nuclear receptor domain and the NR LBD domain are required for binding of the RARB/RXRA heterodimer to both DR1 and DR5 DNA elements.</text>
</comment>
<comment type="disease" evidence="9 10">
    <disease id="DI-03951">
        <name>Microphthalmia, syndromic, 12</name>
        <acronym>MCOPS12</acronym>
        <description>A form of microphthalmia, a disorder of eye formation, ranging from small size of a single eye to complete bilateral absence of ocular tissues (anophthalmia). In many cases, microphthalmia/anophthalmia occurs in association with syndromes that include non-ocular abnormalities. MCOPS12 patients manifest variable features, including diaphragmatic hernia, pulmonary hypoplasia, and cardiac abnormalities.</description>
        <dbReference type="MIM" id="615524"/>
    </disease>
    <text>The disease is caused by variants affecting the gene represented in this entry.</text>
</comment>
<comment type="similarity">
    <text evidence="17">Belongs to the nuclear hormone receptor family. NR1 subfamily.</text>
</comment>
<comment type="sequence caution" evidence="17">
    <conflict type="erroneous gene model prediction">
        <sequence resource="EMBL-CDS" id="CAA27637"/>
    </conflict>
</comment>